<name>YTDC2_HUMAN</name>
<protein>
    <recommendedName>
        <fullName evidence="16">3'-5' RNA helicase YTHDC2</fullName>
        <ecNumber evidence="11">3.6.4.13</ecNumber>
    </recommendedName>
    <alternativeName>
        <fullName evidence="15">YTH domain-containing protein 2</fullName>
        <shortName evidence="15">hYTHDC2</shortName>
    </alternativeName>
</protein>
<organism>
    <name type="scientific">Homo sapiens</name>
    <name type="common">Human</name>
    <dbReference type="NCBI Taxonomy" id="9606"/>
    <lineage>
        <taxon>Eukaryota</taxon>
        <taxon>Metazoa</taxon>
        <taxon>Chordata</taxon>
        <taxon>Craniata</taxon>
        <taxon>Vertebrata</taxon>
        <taxon>Euteleostomi</taxon>
        <taxon>Mammalia</taxon>
        <taxon>Eutheria</taxon>
        <taxon>Euarchontoglires</taxon>
        <taxon>Primates</taxon>
        <taxon>Haplorrhini</taxon>
        <taxon>Catarrhini</taxon>
        <taxon>Hominidae</taxon>
        <taxon>Homo</taxon>
    </lineage>
</organism>
<keyword id="KW-0002">3D-structure</keyword>
<keyword id="KW-0040">ANK repeat</keyword>
<keyword id="KW-0067">ATP-binding</keyword>
<keyword id="KW-0963">Cytoplasm</keyword>
<keyword id="KW-0221">Differentiation</keyword>
<keyword id="KW-0347">Helicase</keyword>
<keyword id="KW-0378">Hydrolase</keyword>
<keyword id="KW-0469">Meiosis</keyword>
<keyword id="KW-0547">Nucleotide-binding</keyword>
<keyword id="KW-0896">Oogenesis</keyword>
<keyword id="KW-0597">Phosphoprotein</keyword>
<keyword id="KW-1267">Proteomics identification</keyword>
<keyword id="KW-1185">Reference proteome</keyword>
<keyword id="KW-0677">Repeat</keyword>
<keyword id="KW-0694">RNA-binding</keyword>
<keyword id="KW-0744">Spermatogenesis</keyword>
<accession>Q9H6S0</accession>
<accession>B2RP66</accession>
<dbReference type="EC" id="3.6.4.13" evidence="11"/>
<dbReference type="EMBL" id="AC093208">
    <property type="status" value="NOT_ANNOTATED_CDS"/>
    <property type="molecule type" value="Genomic_DNA"/>
</dbReference>
<dbReference type="EMBL" id="AC010389">
    <property type="status" value="NOT_ANNOTATED_CDS"/>
    <property type="molecule type" value="Genomic_DNA"/>
</dbReference>
<dbReference type="EMBL" id="BC137285">
    <property type="protein sequence ID" value="AAI37286.1"/>
    <property type="molecule type" value="mRNA"/>
</dbReference>
<dbReference type="EMBL" id="AK025593">
    <property type="protein sequence ID" value="BAB15183.1"/>
    <property type="status" value="ALT_INIT"/>
    <property type="molecule type" value="mRNA"/>
</dbReference>
<dbReference type="CCDS" id="CCDS4113.1"/>
<dbReference type="RefSeq" id="NP_073739.3">
    <property type="nucleotide sequence ID" value="NM_022828.4"/>
</dbReference>
<dbReference type="RefSeq" id="XP_016865219.1">
    <property type="nucleotide sequence ID" value="XM_017009730.1"/>
</dbReference>
<dbReference type="RefSeq" id="XP_047273483.1">
    <property type="nucleotide sequence ID" value="XM_047417527.1"/>
</dbReference>
<dbReference type="PDB" id="2YU6">
    <property type="method" value="NMR"/>
    <property type="chains" value="A=1288-1421"/>
</dbReference>
<dbReference type="PDB" id="6K6U">
    <property type="method" value="X-ray"/>
    <property type="resolution" value="2.27 A"/>
    <property type="chains" value="A/B=1286-1426"/>
</dbReference>
<dbReference type="PDB" id="6LR2">
    <property type="method" value="NMR"/>
    <property type="chains" value="A=1288-1421"/>
</dbReference>
<dbReference type="PDB" id="9H35">
    <property type="method" value="X-ray"/>
    <property type="resolution" value="2.68 A"/>
    <property type="chains" value="A/B/C/D=1285-1424"/>
</dbReference>
<dbReference type="PDB" id="9H36">
    <property type="method" value="X-ray"/>
    <property type="resolution" value="2.62 A"/>
    <property type="chains" value="A/B=1285-1424"/>
</dbReference>
<dbReference type="PDBsum" id="2YU6"/>
<dbReference type="PDBsum" id="6K6U"/>
<dbReference type="PDBsum" id="6LR2"/>
<dbReference type="PDBsum" id="9H35"/>
<dbReference type="PDBsum" id="9H36"/>
<dbReference type="SMR" id="Q9H6S0"/>
<dbReference type="BioGRID" id="122321">
    <property type="interactions" value="237"/>
</dbReference>
<dbReference type="FunCoup" id="Q9H6S0">
    <property type="interactions" value="2585"/>
</dbReference>
<dbReference type="IntAct" id="Q9H6S0">
    <property type="interactions" value="151"/>
</dbReference>
<dbReference type="MINT" id="Q9H6S0"/>
<dbReference type="STRING" id="9606.ENSP00000161863"/>
<dbReference type="GlyGen" id="Q9H6S0">
    <property type="glycosylation" value="4 sites, 1 N-linked glycan (1 site), 1 O-linked glycan (2 sites)"/>
</dbReference>
<dbReference type="iPTMnet" id="Q9H6S0"/>
<dbReference type="PhosphoSitePlus" id="Q9H6S0"/>
<dbReference type="BioMuta" id="YTHDC2"/>
<dbReference type="DMDM" id="239938805"/>
<dbReference type="jPOST" id="Q9H6S0"/>
<dbReference type="MassIVE" id="Q9H6S0"/>
<dbReference type="PaxDb" id="9606-ENSP00000161863"/>
<dbReference type="PeptideAtlas" id="Q9H6S0"/>
<dbReference type="ProteomicsDB" id="81025"/>
<dbReference type="Pumba" id="Q9H6S0"/>
<dbReference type="Antibodypedia" id="48855">
    <property type="antibodies" value="45 antibodies from 17 providers"/>
</dbReference>
<dbReference type="DNASU" id="64848"/>
<dbReference type="Ensembl" id="ENST00000161863.9">
    <property type="protein sequence ID" value="ENSP00000161863.4"/>
    <property type="gene ID" value="ENSG00000047188.16"/>
</dbReference>
<dbReference type="GeneID" id="64848"/>
<dbReference type="KEGG" id="hsa:64848"/>
<dbReference type="MANE-Select" id="ENST00000161863.9">
    <property type="protein sequence ID" value="ENSP00000161863.4"/>
    <property type="RefSeq nucleotide sequence ID" value="NM_022828.5"/>
    <property type="RefSeq protein sequence ID" value="NP_073739.3"/>
</dbReference>
<dbReference type="UCSC" id="uc003kqn.4">
    <property type="organism name" value="human"/>
</dbReference>
<dbReference type="AGR" id="HGNC:24721"/>
<dbReference type="CTD" id="64848"/>
<dbReference type="DisGeNET" id="64848"/>
<dbReference type="GeneCards" id="YTHDC2"/>
<dbReference type="HGNC" id="HGNC:24721">
    <property type="gene designation" value="YTHDC2"/>
</dbReference>
<dbReference type="HPA" id="ENSG00000047188">
    <property type="expression patterns" value="Low tissue specificity"/>
</dbReference>
<dbReference type="MalaCards" id="YTHDC2"/>
<dbReference type="MIM" id="616530">
    <property type="type" value="gene"/>
</dbReference>
<dbReference type="neXtProt" id="NX_Q9H6S0"/>
<dbReference type="OpenTargets" id="ENSG00000047188"/>
<dbReference type="PharmGKB" id="PA134912676"/>
<dbReference type="VEuPathDB" id="HostDB:ENSG00000047188"/>
<dbReference type="eggNOG" id="KOG0920">
    <property type="taxonomic scope" value="Eukaryota"/>
</dbReference>
<dbReference type="eggNOG" id="KOG0922">
    <property type="taxonomic scope" value="Eukaryota"/>
</dbReference>
<dbReference type="eggNOG" id="KOG1902">
    <property type="taxonomic scope" value="Eukaryota"/>
</dbReference>
<dbReference type="GeneTree" id="ENSGT00940000155826"/>
<dbReference type="HOGENOM" id="CLU_001832_1_6_1"/>
<dbReference type="InParanoid" id="Q9H6S0"/>
<dbReference type="OMA" id="EWIKRAN"/>
<dbReference type="OrthoDB" id="6103986at2759"/>
<dbReference type="PAN-GO" id="Q9H6S0">
    <property type="GO annotations" value="3 GO annotations based on evolutionary models"/>
</dbReference>
<dbReference type="PhylomeDB" id="Q9H6S0"/>
<dbReference type="TreeFam" id="TF318311"/>
<dbReference type="PathwayCommons" id="Q9H6S0"/>
<dbReference type="SignaLink" id="Q9H6S0"/>
<dbReference type="SIGNOR" id="Q9H6S0"/>
<dbReference type="BioGRID-ORCS" id="64848">
    <property type="hits" value="11 hits in 1155 CRISPR screens"/>
</dbReference>
<dbReference type="CD-CODE" id="232F8A39">
    <property type="entry name" value="P-body"/>
</dbReference>
<dbReference type="CD-CODE" id="DEE660B4">
    <property type="entry name" value="Stress granule"/>
</dbReference>
<dbReference type="ChiTaRS" id="YTHDC2">
    <property type="organism name" value="human"/>
</dbReference>
<dbReference type="EvolutionaryTrace" id="Q9H6S0"/>
<dbReference type="GenomeRNAi" id="64848"/>
<dbReference type="Pharos" id="Q9H6S0">
    <property type="development level" value="Tbio"/>
</dbReference>
<dbReference type="PRO" id="PR:Q9H6S0"/>
<dbReference type="Proteomes" id="UP000005640">
    <property type="component" value="Chromosome 5"/>
</dbReference>
<dbReference type="RNAct" id="Q9H6S0">
    <property type="molecule type" value="protein"/>
</dbReference>
<dbReference type="Bgee" id="ENSG00000047188">
    <property type="expression patterns" value="Expressed in endothelial cell and 204 other cell types or tissues"/>
</dbReference>
<dbReference type="ExpressionAtlas" id="Q9H6S0">
    <property type="expression patterns" value="baseline and differential"/>
</dbReference>
<dbReference type="GO" id="GO:0005783">
    <property type="term" value="C:endoplasmic reticulum"/>
    <property type="evidence" value="ECO:0000314"/>
    <property type="project" value="WormBase"/>
</dbReference>
<dbReference type="GO" id="GO:0048471">
    <property type="term" value="C:perinuclear region of cytoplasm"/>
    <property type="evidence" value="ECO:0007669"/>
    <property type="project" value="UniProtKB-SubCell"/>
</dbReference>
<dbReference type="GO" id="GO:0035770">
    <property type="term" value="C:ribonucleoprotein granule"/>
    <property type="evidence" value="ECO:0000250"/>
    <property type="project" value="UniProtKB"/>
</dbReference>
<dbReference type="GO" id="GO:0034458">
    <property type="term" value="F:3'-5' RNA helicase activity"/>
    <property type="evidence" value="ECO:0000314"/>
    <property type="project" value="UniProtKB"/>
</dbReference>
<dbReference type="GO" id="GO:0005524">
    <property type="term" value="F:ATP binding"/>
    <property type="evidence" value="ECO:0007669"/>
    <property type="project" value="UniProtKB-KW"/>
</dbReference>
<dbReference type="GO" id="GO:0016887">
    <property type="term" value="F:ATP hydrolysis activity"/>
    <property type="evidence" value="ECO:0007669"/>
    <property type="project" value="RHEA"/>
</dbReference>
<dbReference type="GO" id="GO:0008186">
    <property type="term" value="F:ATP-dependent activity, acting on RNA"/>
    <property type="evidence" value="ECO:0000314"/>
    <property type="project" value="AgBase"/>
</dbReference>
<dbReference type="GO" id="GO:0004386">
    <property type="term" value="F:helicase activity"/>
    <property type="evidence" value="ECO:0000318"/>
    <property type="project" value="GO_Central"/>
</dbReference>
<dbReference type="GO" id="GO:1990247">
    <property type="term" value="F:N6-methyladenosine-containing RNA reader activity"/>
    <property type="evidence" value="ECO:0000314"/>
    <property type="project" value="UniProtKB"/>
</dbReference>
<dbReference type="GO" id="GO:0003723">
    <property type="term" value="F:RNA binding"/>
    <property type="evidence" value="ECO:0007005"/>
    <property type="project" value="UniProtKB"/>
</dbReference>
<dbReference type="GO" id="GO:0070063">
    <property type="term" value="F:RNA polymerase binding"/>
    <property type="evidence" value="ECO:0000353"/>
    <property type="project" value="AgBase"/>
</dbReference>
<dbReference type="GO" id="GO:0051729">
    <property type="term" value="P:germline cell cycle switching, mitotic to meiotic cell cycle"/>
    <property type="evidence" value="ECO:0000250"/>
    <property type="project" value="UniProtKB"/>
</dbReference>
<dbReference type="GO" id="GO:0051321">
    <property type="term" value="P:meiotic cell cycle"/>
    <property type="evidence" value="ECO:0007669"/>
    <property type="project" value="UniProtKB-KW"/>
</dbReference>
<dbReference type="GO" id="GO:0048599">
    <property type="term" value="P:oocyte development"/>
    <property type="evidence" value="ECO:0000250"/>
    <property type="project" value="UniProtKB"/>
</dbReference>
<dbReference type="GO" id="GO:0044829">
    <property type="term" value="P:positive regulation by host of viral genome replication"/>
    <property type="evidence" value="ECO:0000315"/>
    <property type="project" value="AgBase"/>
</dbReference>
<dbReference type="GO" id="GO:0070555">
    <property type="term" value="P:response to interleukin-1"/>
    <property type="evidence" value="ECO:0000314"/>
    <property type="project" value="AgBase"/>
</dbReference>
<dbReference type="GO" id="GO:0034612">
    <property type="term" value="P:response to tumor necrosis factor"/>
    <property type="evidence" value="ECO:0000314"/>
    <property type="project" value="AgBase"/>
</dbReference>
<dbReference type="GO" id="GO:0007286">
    <property type="term" value="P:spermatid development"/>
    <property type="evidence" value="ECO:0000250"/>
    <property type="project" value="UniProtKB"/>
</dbReference>
<dbReference type="CDD" id="cd17987">
    <property type="entry name" value="DEXHc_YTHDC2"/>
    <property type="match status" value="1"/>
</dbReference>
<dbReference type="CDD" id="cd06007">
    <property type="entry name" value="R3H_DEXH_helicase"/>
    <property type="match status" value="1"/>
</dbReference>
<dbReference type="CDD" id="cd18791">
    <property type="entry name" value="SF2_C_RHA"/>
    <property type="match status" value="1"/>
</dbReference>
<dbReference type="CDD" id="cd21134">
    <property type="entry name" value="YTH"/>
    <property type="match status" value="1"/>
</dbReference>
<dbReference type="FunFam" id="1.20.120.1080:FF:000008">
    <property type="entry name" value="probable ATP-dependent RNA helicase YTHDC2"/>
    <property type="match status" value="1"/>
</dbReference>
<dbReference type="FunFam" id="3.10.590.10:FF:000004">
    <property type="entry name" value="probable ATP-dependent RNA helicase YTHDC2"/>
    <property type="match status" value="1"/>
</dbReference>
<dbReference type="FunFam" id="3.30.1370.50:FF:000005">
    <property type="entry name" value="probable ATP-dependent RNA helicase YTHDC2"/>
    <property type="match status" value="1"/>
</dbReference>
<dbReference type="FunFam" id="3.40.50.300:FF:000284">
    <property type="entry name" value="probable ATP-dependent RNA helicase YTHDC2"/>
    <property type="match status" value="1"/>
</dbReference>
<dbReference type="FunFam" id="3.40.50.300:FF:000811">
    <property type="entry name" value="probable ATP-dependent RNA helicase YTHDC2"/>
    <property type="match status" value="1"/>
</dbReference>
<dbReference type="FunFam" id="1.25.40.20:FF:000492">
    <property type="entry name" value="YTH domain-containing 2"/>
    <property type="match status" value="1"/>
</dbReference>
<dbReference type="Gene3D" id="1.20.120.1080">
    <property type="match status" value="1"/>
</dbReference>
<dbReference type="Gene3D" id="1.25.40.20">
    <property type="entry name" value="Ankyrin repeat-containing domain"/>
    <property type="match status" value="1"/>
</dbReference>
<dbReference type="Gene3D" id="3.40.50.300">
    <property type="entry name" value="P-loop containing nucleotide triphosphate hydrolases"/>
    <property type="match status" value="2"/>
</dbReference>
<dbReference type="Gene3D" id="3.10.590.10">
    <property type="entry name" value="ph1033 like domains"/>
    <property type="match status" value="1"/>
</dbReference>
<dbReference type="Gene3D" id="3.30.1370.50">
    <property type="entry name" value="R3H-like domain"/>
    <property type="match status" value="1"/>
</dbReference>
<dbReference type="InterPro" id="IPR002110">
    <property type="entry name" value="Ankyrin_rpt"/>
</dbReference>
<dbReference type="InterPro" id="IPR036770">
    <property type="entry name" value="Ankyrin_rpt-contain_sf"/>
</dbReference>
<dbReference type="InterPro" id="IPR011709">
    <property type="entry name" value="DEAD-box_helicase_OB_fold"/>
</dbReference>
<dbReference type="InterPro" id="IPR011545">
    <property type="entry name" value="DEAD/DEAH_box_helicase_dom"/>
</dbReference>
<dbReference type="InterPro" id="IPR048333">
    <property type="entry name" value="HA2_WH"/>
</dbReference>
<dbReference type="InterPro" id="IPR007502">
    <property type="entry name" value="Helicase-assoc_dom"/>
</dbReference>
<dbReference type="InterPro" id="IPR014001">
    <property type="entry name" value="Helicase_ATP-bd"/>
</dbReference>
<dbReference type="InterPro" id="IPR001650">
    <property type="entry name" value="Helicase_C-like"/>
</dbReference>
<dbReference type="InterPro" id="IPR027417">
    <property type="entry name" value="P-loop_NTPase"/>
</dbReference>
<dbReference type="InterPro" id="IPR034083">
    <property type="entry name" value="R3H_DEXH_helicase"/>
</dbReference>
<dbReference type="InterPro" id="IPR001374">
    <property type="entry name" value="R3H_dom"/>
</dbReference>
<dbReference type="InterPro" id="IPR036867">
    <property type="entry name" value="R3H_dom_sf"/>
</dbReference>
<dbReference type="InterPro" id="IPR007275">
    <property type="entry name" value="YTH_domain"/>
</dbReference>
<dbReference type="PANTHER" id="PTHR18934:SF213">
    <property type="entry name" value="3'-5' RNA HELICASE YTHDC2"/>
    <property type="match status" value="1"/>
</dbReference>
<dbReference type="PANTHER" id="PTHR18934">
    <property type="entry name" value="ATP-DEPENDENT RNA HELICASE"/>
    <property type="match status" value="1"/>
</dbReference>
<dbReference type="Pfam" id="PF00270">
    <property type="entry name" value="DEAD"/>
    <property type="match status" value="1"/>
</dbReference>
<dbReference type="Pfam" id="PF21010">
    <property type="entry name" value="HA2_C"/>
    <property type="match status" value="1"/>
</dbReference>
<dbReference type="Pfam" id="PF04408">
    <property type="entry name" value="HA2_N"/>
    <property type="match status" value="1"/>
</dbReference>
<dbReference type="Pfam" id="PF00271">
    <property type="entry name" value="Helicase_C"/>
    <property type="match status" value="1"/>
</dbReference>
<dbReference type="Pfam" id="PF07717">
    <property type="entry name" value="OB_NTP_bind"/>
    <property type="match status" value="1"/>
</dbReference>
<dbReference type="Pfam" id="PF01424">
    <property type="entry name" value="R3H"/>
    <property type="match status" value="1"/>
</dbReference>
<dbReference type="Pfam" id="PF04146">
    <property type="entry name" value="YTH"/>
    <property type="match status" value="1"/>
</dbReference>
<dbReference type="SMART" id="SM00487">
    <property type="entry name" value="DEXDc"/>
    <property type="match status" value="1"/>
</dbReference>
<dbReference type="SMART" id="SM00847">
    <property type="entry name" value="HA2"/>
    <property type="match status" value="1"/>
</dbReference>
<dbReference type="SMART" id="SM00490">
    <property type="entry name" value="HELICc"/>
    <property type="match status" value="1"/>
</dbReference>
<dbReference type="SMART" id="SM00393">
    <property type="entry name" value="R3H"/>
    <property type="match status" value="1"/>
</dbReference>
<dbReference type="SUPFAM" id="SSF48403">
    <property type="entry name" value="Ankyrin repeat"/>
    <property type="match status" value="1"/>
</dbReference>
<dbReference type="SUPFAM" id="SSF52540">
    <property type="entry name" value="P-loop containing nucleoside triphosphate hydrolases"/>
    <property type="match status" value="2"/>
</dbReference>
<dbReference type="SUPFAM" id="SSF82708">
    <property type="entry name" value="R3H domain"/>
    <property type="match status" value="1"/>
</dbReference>
<dbReference type="PROSITE" id="PS50297">
    <property type="entry name" value="ANK_REP_REGION"/>
    <property type="match status" value="1"/>
</dbReference>
<dbReference type="PROSITE" id="PS50088">
    <property type="entry name" value="ANK_REPEAT"/>
    <property type="match status" value="1"/>
</dbReference>
<dbReference type="PROSITE" id="PS51192">
    <property type="entry name" value="HELICASE_ATP_BIND_1"/>
    <property type="match status" value="1"/>
</dbReference>
<dbReference type="PROSITE" id="PS51194">
    <property type="entry name" value="HELICASE_CTER"/>
    <property type="match status" value="1"/>
</dbReference>
<dbReference type="PROSITE" id="PS51061">
    <property type="entry name" value="R3H"/>
    <property type="match status" value="1"/>
</dbReference>
<dbReference type="PROSITE" id="PS50882">
    <property type="entry name" value="YTH"/>
    <property type="match status" value="1"/>
</dbReference>
<gene>
    <name evidence="15 17" type="primary">YTHDC2</name>
</gene>
<sequence>MSRPSSVSPRQPAPGGGGGGGPSPCGPGGGGRAKGLKDIRIDEEVKIAVNIALERFRYGDQREMEFPSSLTSTERAFIHRLSQSLGLVSKSKGKGANRYLTVKKKDGSETAHAMMTCNLTHNTKHAVRSLIQRFPVTNKERTELLPKTERGNVFAVEAENREMSKTSGRLNNGIPQIPVKRGESEFDSFRQSLPVFEKQEEIVKIIKENKVVLIVGETGSGKTTQIPQFLLDDCFKNGIPCRIFCTQPRRLAAIAVAERVAAERRERIGQTIGYQIRLESRVSPKTLLTFCTNGVLLRTLMAGDSTLSTVTHVIVDEVHERDRFSDFLLTKLRDLLQKHPTLKLILSSAALDVNLFIRYFGSCPVIYIQGRPFEVKEMFLEDILRTTGYTNKEMLKYKKEKQQEEKQQTTLTEWYSAQENSFKPESQRQRTVLNVTDEYDLLDDGGDAVFSQLTEKDVNCLEPWLIKEMDACLSDIWLHKDIDAFAQVFHLILTENVSVDYRHSETSATALMVAAGRGFASQVEQLISMGANVHSKASNGWMALDWAKHFGQTEIVDLLESYSATLEFGNLDESSLVQTNGSDLSAEDRELLKAYHHSFDDEKVDLDLIMHLLYNICHSCDAGAVLIFLPGYDEIVGLRDRILFDDKRFADSTHRYQVFMLHSNMQTSDQKKVLKNPPAGVRKIILSTNIAETSITVNDVVFVIDSGKVKEKSFDALNFVTMLKMVWISKASAIQRKGRAGRCRPGICFRLFSRLRFQNMLEFQTPELLRMPLQELCLHTKLLAPVNCPIADFLMKAPEPPPALIVRNAVQMLKTIDAMDTWEDLTELGYHLADLPVEPHLGKMVLCAVVLKCLDPILTIACTLAYRDPFVLPTQASQKRAAMLCRKRFTAGAFSDHMALLRAFQAWQKARSDGWERAFCEKNFLSQATMEIIIGMRTQLLGQLRASGFVRARGGGDIRDVNTNSENWAVVKAALVAGMYPNLVHVDRENLVLTGPKEKKVRFHPASVLSQPQYKKIPPANGQAAAIKALPTDWLIYDEMTRAHRIANIRCCSAVTPVTILVFCGPARLASNALQEPSSFRVDGIPNDSSDSEMEDKTTANLAALKLDEWLHFTLEPEAASLLLQLRQKWHSLFLRRMRAPSKPWSQVDEATIRAIIAVLSTEEQSAGLQQPSGIGQRPRPMSSEELPLASSWRSNNSRKSSADTEFSDECTTAERVLMKSPSPALHPPQKYKDRGILHPKRGTEDRSDQSSLKSTDSSSYPSPCASPSPPSSGKGSKSPSPRPNMPVRYFIMKSSNLRNLEISQQKGIWSTTPSNERKLNRAFWESSIVYLVFSVQGSGHFQGFSRMSSEIGREKSQDWGSAGLGGVFKVEWIRKESLPFQFAHHLLNPWNDNKKVQISRDGQELEPLVGEQLLQLWERLPLGEKNTTD</sequence>
<comment type="function">
    <text evidence="1 10 11 13">3'-5' RNA helicase that plays a key role in the male and female germline by promoting transition from mitotic to meiotic divisions in stem cells (PubMed:26318451, PubMed:29033321, PubMed:29970596). Specifically recognizes and binds N6-methyladenosine (m6A)-containing RNAs, a modification present at internal sites of mRNAs and some non-coding RNAs that plays a role in the efficiency of RNA processing and stability (PubMed:26318451, PubMed:29033321). Essential for ensuring a successful progression of the meiotic program in the germline by regulating the level of m6A-containing RNAs (By similarity). Acts by binding and promoting degradation of m6A-containing mRNAs: the 3'-5' RNA helicase activity is required for this process and RNA degradation may be mediated by XRN1 exoribonuclease (PubMed:29033321). Required for both spermatogenesis and oogenesis (By similarity).</text>
</comment>
<comment type="catalytic activity">
    <reaction evidence="11">
        <text>ATP + H2O = ADP + phosphate + H(+)</text>
        <dbReference type="Rhea" id="RHEA:13065"/>
        <dbReference type="ChEBI" id="CHEBI:15377"/>
        <dbReference type="ChEBI" id="CHEBI:15378"/>
        <dbReference type="ChEBI" id="CHEBI:30616"/>
        <dbReference type="ChEBI" id="CHEBI:43474"/>
        <dbReference type="ChEBI" id="CHEBI:456216"/>
        <dbReference type="EC" id="3.6.4.13"/>
    </reaction>
</comment>
<comment type="subunit">
    <text evidence="1 11 13 14">Interacts with MEIOC; binds transcripts that regulate the mitotic cell cycle inhibiting progression into metaphase, thereby allowing meiotic prophase to proceed normally (By similarity). Interacts (via ANK repeats) with XRN1 (PubMed:29033321, PubMed:29970596). Interacts with ZCCHC4 (PubMed:31799605). Associates with the small ribosomal subunit (PubMed:29970596). Interacts with RBM46 (By similarity).</text>
</comment>
<comment type="interaction">
    <interactant intactId="EBI-1057466">
        <id>Q9H6S0</id>
    </interactant>
    <interactant intactId="EBI-751345">
        <id>Q15306</id>
        <label>IRF4</label>
    </interactant>
    <organismsDiffer>false</organismsDiffer>
    <experiments>2</experiments>
</comment>
<comment type="interaction">
    <interactant intactId="EBI-1057466">
        <id>Q9H6S0</id>
    </interactant>
    <interactant intactId="EBI-6117042">
        <id>Q99J34</id>
        <label>Irak1</label>
    </interactant>
    <organismsDiffer>true</organismsDiffer>
    <experiments>2</experiments>
</comment>
<comment type="interaction">
    <interactant intactId="EBI-1057466">
        <id>Q9H6S0</id>
    </interactant>
    <interactant intactId="EBI-11664020">
        <id>A2AG06</id>
        <label>Meioc</label>
    </interactant>
    <organismsDiffer>true</organismsDiffer>
    <experiments>2</experiments>
</comment>
<comment type="subcellular location">
    <subcellularLocation>
        <location evidence="1">Cytoplasm</location>
    </subcellularLocation>
    <subcellularLocation>
        <location evidence="13">Cytoplasm</location>
        <location evidence="13">Perinuclear region</location>
    </subcellularLocation>
</comment>
<comment type="tissue specificity">
    <text evidence="12">Expressed in testis (PubMed:29087293). Not detected in spermatogonia next to the tubule wall but is strongly expressed in spermatocytes, suggesting that it is up-regulated in germ cells upon entry into meiosis (PubMed:29087293).</text>
</comment>
<comment type="domain">
    <text evidence="11">The YTH domain mediates RNA-binding. It recognizes and binds N6-methyladenosine (m6A)-containing RNAs.</text>
</comment>
<comment type="similarity">
    <text evidence="16">Belongs to the DEAD box helicase family. DEAH subfamily.</text>
</comment>
<comment type="sequence caution" evidence="16">
    <conflict type="erroneous initiation">
        <sequence resource="EMBL-CDS" id="BAB15183"/>
    </conflict>
    <text>Truncated N-terminus.</text>
</comment>
<feature type="chain" id="PRO_0000249340" description="3'-5' RNA helicase YTHDC2">
    <location>
        <begin position="1"/>
        <end position="1430"/>
    </location>
</feature>
<feature type="domain" description="R3H" evidence="5">
    <location>
        <begin position="38"/>
        <end position="106"/>
    </location>
</feature>
<feature type="domain" description="Helicase ATP-binding" evidence="6">
    <location>
        <begin position="203"/>
        <end position="369"/>
    </location>
</feature>
<feature type="repeat" description="ANK 1">
    <location>
        <begin position="506"/>
        <end position="538"/>
    </location>
</feature>
<feature type="repeat" description="ANK 2">
    <location>
        <begin position="539"/>
        <end position="571"/>
    </location>
</feature>
<feature type="domain" description="Helicase C-terminal" evidence="7">
    <location>
        <begin position="612"/>
        <end position="784"/>
    </location>
</feature>
<feature type="domain" description="YTH" evidence="4">
    <location>
        <begin position="1288"/>
        <end position="1418"/>
    </location>
</feature>
<feature type="region of interest" description="Disordered" evidence="8">
    <location>
        <begin position="1"/>
        <end position="37"/>
    </location>
</feature>
<feature type="region of interest" description="Disordered" evidence="8">
    <location>
        <begin position="1164"/>
        <end position="1288"/>
    </location>
</feature>
<feature type="short sequence motif" description="DEAH box">
    <location>
        <begin position="316"/>
        <end position="319"/>
    </location>
</feature>
<feature type="compositionally biased region" description="Gly residues" evidence="8">
    <location>
        <begin position="14"/>
        <end position="33"/>
    </location>
</feature>
<feature type="compositionally biased region" description="Polar residues" evidence="8">
    <location>
        <begin position="1164"/>
        <end position="1174"/>
    </location>
</feature>
<feature type="compositionally biased region" description="Low complexity" evidence="8">
    <location>
        <begin position="1191"/>
        <end position="1200"/>
    </location>
</feature>
<feature type="compositionally biased region" description="Basic and acidic residues" evidence="8">
    <location>
        <begin position="1231"/>
        <end position="1249"/>
    </location>
</feature>
<feature type="compositionally biased region" description="Low complexity" evidence="8">
    <location>
        <begin position="1250"/>
        <end position="1264"/>
    </location>
</feature>
<feature type="binding site" evidence="6">
    <location>
        <begin position="216"/>
        <end position="223"/>
    </location>
    <ligand>
        <name>ATP</name>
        <dbReference type="ChEBI" id="CHEBI:30616"/>
    </ligand>
</feature>
<feature type="binding site" evidence="3">
    <location>
        <begin position="1294"/>
        <end position="1296"/>
    </location>
    <ligand>
        <name>RNA</name>
        <dbReference type="ChEBI" id="CHEBI:33697"/>
    </ligand>
    <ligandPart>
        <name>N(6)-methyladenosine 5'-phosphate residue</name>
        <dbReference type="ChEBI" id="CHEBI:74449"/>
    </ligandPart>
</feature>
<feature type="binding site" evidence="2">
    <location>
        <position position="1310"/>
    </location>
    <ligand>
        <name>RNA</name>
        <dbReference type="ChEBI" id="CHEBI:33697"/>
    </ligand>
    <ligandPart>
        <name>N(6)-methyladenosine 5'-phosphate residue</name>
        <dbReference type="ChEBI" id="CHEBI:74449"/>
    </ligandPart>
</feature>
<feature type="binding site" evidence="2">
    <location>
        <position position="1360"/>
    </location>
    <ligand>
        <name>RNA</name>
        <dbReference type="ChEBI" id="CHEBI:33697"/>
    </ligand>
    <ligandPart>
        <name>N(6)-methyladenosine 5'-phosphate residue</name>
        <dbReference type="ChEBI" id="CHEBI:74449"/>
    </ligandPart>
</feature>
<feature type="modified residue" description="Phosphoserine" evidence="20">
    <location>
        <position position="1089"/>
    </location>
</feature>
<feature type="modified residue" description="Phosphoserine" evidence="1">
    <location>
        <position position="1090"/>
    </location>
</feature>
<feature type="modified residue" description="Phosphoserine" evidence="19">
    <location>
        <position position="1092"/>
    </location>
</feature>
<feature type="modified residue" description="Phosphoserine" evidence="21">
    <location>
        <position position="1202"/>
    </location>
</feature>
<feature type="modified residue" description="Phosphoserine" evidence="1">
    <location>
        <position position="1263"/>
    </location>
</feature>
<feature type="modified residue" description="Phosphoserine" evidence="1">
    <location>
        <position position="1267"/>
    </location>
</feature>
<feature type="modified residue" description="Phosphoserine" evidence="19">
    <location>
        <position position="1281"/>
    </location>
</feature>
<feature type="sequence variant" id="VAR_058002" description="In dbSNP:rs10071816.">
    <original>S</original>
    <variation>N</variation>
    <location>
        <position position="652"/>
    </location>
</feature>
<feature type="sequence variant" id="VAR_058003" description="In dbSNP:rs1132528." evidence="9">
    <original>L</original>
    <variation>Q</variation>
    <location>
        <position position="1409"/>
    </location>
</feature>
<feature type="mutagenesis site" description="Abolished 3'-5' RNA helicase activity." evidence="11">
    <original>E</original>
    <variation>A</variation>
    <location>
        <position position="317"/>
    </location>
</feature>
<feature type="mutagenesis site" description="Abolished ability to bind N6-methyladenosine (m6A)-containing RNAs." evidence="11">
    <original>W</original>
    <variation>A</variation>
    <location>
        <position position="1360"/>
    </location>
</feature>
<feature type="sequence conflict" description="In Ref. 3; BAB15183." evidence="16" ref="3">
    <original>I</original>
    <variation>V</variation>
    <location>
        <position position="860"/>
    </location>
</feature>
<feature type="sequence conflict" description="In Ref. 3; BAB15183." evidence="16" ref="3">
    <original>L</original>
    <variation>S</variation>
    <location>
        <position position="993"/>
    </location>
</feature>
<feature type="sequence conflict" description="In Ref. 3; BAB15183." evidence="16" ref="3">
    <original>Q</original>
    <variation>R</variation>
    <location>
        <position position="1230"/>
    </location>
</feature>
<feature type="strand" evidence="23">
    <location>
        <begin position="1287"/>
        <end position="1296"/>
    </location>
</feature>
<feature type="helix" evidence="23">
    <location>
        <begin position="1298"/>
        <end position="1307"/>
    </location>
</feature>
<feature type="strand" evidence="22">
    <location>
        <begin position="1309"/>
        <end position="1311"/>
    </location>
</feature>
<feature type="helix" evidence="23">
    <location>
        <begin position="1314"/>
        <end position="1326"/>
    </location>
</feature>
<feature type="strand" evidence="23">
    <location>
        <begin position="1327"/>
        <end position="1336"/>
    </location>
</feature>
<feature type="strand" evidence="23">
    <location>
        <begin position="1339"/>
        <end position="1342"/>
    </location>
</feature>
<feature type="strand" evidence="23">
    <location>
        <begin position="1345"/>
        <end position="1348"/>
    </location>
</feature>
<feature type="strand" evidence="22">
    <location>
        <begin position="1352"/>
        <end position="1354"/>
    </location>
</feature>
<feature type="strand" evidence="23">
    <location>
        <begin position="1369"/>
        <end position="1375"/>
    </location>
</feature>
<feature type="helix" evidence="23">
    <location>
        <begin position="1381"/>
        <end position="1384"/>
    </location>
</feature>
<feature type="helix" evidence="23">
    <location>
        <begin position="1390"/>
        <end position="1392"/>
    </location>
</feature>
<feature type="strand" evidence="22">
    <location>
        <begin position="1404"/>
        <end position="1406"/>
    </location>
</feature>
<feature type="helix" evidence="23">
    <location>
        <begin position="1408"/>
        <end position="1416"/>
    </location>
</feature>
<feature type="helix" evidence="23">
    <location>
        <begin position="1417"/>
        <end position="1420"/>
    </location>
</feature>
<evidence type="ECO:0000250" key="1">
    <source>
        <dbReference type="UniProtKB" id="B2RR83"/>
    </source>
</evidence>
<evidence type="ECO:0000250" key="2">
    <source>
        <dbReference type="UniProtKB" id="Q96MU7"/>
    </source>
</evidence>
<evidence type="ECO:0000250" key="3">
    <source>
        <dbReference type="UniProtKB" id="Q9Y5A9"/>
    </source>
</evidence>
<evidence type="ECO:0000255" key="4">
    <source>
        <dbReference type="PROSITE-ProRule" id="PRU00225"/>
    </source>
</evidence>
<evidence type="ECO:0000255" key="5">
    <source>
        <dbReference type="PROSITE-ProRule" id="PRU00382"/>
    </source>
</evidence>
<evidence type="ECO:0000255" key="6">
    <source>
        <dbReference type="PROSITE-ProRule" id="PRU00541"/>
    </source>
</evidence>
<evidence type="ECO:0000255" key="7">
    <source>
        <dbReference type="PROSITE-ProRule" id="PRU00542"/>
    </source>
</evidence>
<evidence type="ECO:0000256" key="8">
    <source>
        <dbReference type="SAM" id="MobiDB-lite"/>
    </source>
</evidence>
<evidence type="ECO:0000269" key="9">
    <source>
    </source>
</evidence>
<evidence type="ECO:0000269" key="10">
    <source>
    </source>
</evidence>
<evidence type="ECO:0000269" key="11">
    <source>
    </source>
</evidence>
<evidence type="ECO:0000269" key="12">
    <source>
    </source>
</evidence>
<evidence type="ECO:0000269" key="13">
    <source>
    </source>
</evidence>
<evidence type="ECO:0000269" key="14">
    <source>
    </source>
</evidence>
<evidence type="ECO:0000303" key="15">
    <source>
    </source>
</evidence>
<evidence type="ECO:0000305" key="16"/>
<evidence type="ECO:0000312" key="17">
    <source>
        <dbReference type="HGNC" id="HGNC:24721"/>
    </source>
</evidence>
<evidence type="ECO:0007744" key="18">
    <source>
        <dbReference type="PDB" id="6K6U"/>
    </source>
</evidence>
<evidence type="ECO:0007744" key="19">
    <source>
    </source>
</evidence>
<evidence type="ECO:0007744" key="20">
    <source>
    </source>
</evidence>
<evidence type="ECO:0007744" key="21">
    <source>
    </source>
</evidence>
<evidence type="ECO:0007829" key="22">
    <source>
        <dbReference type="PDB" id="2YU6"/>
    </source>
</evidence>
<evidence type="ECO:0007829" key="23">
    <source>
        <dbReference type="PDB" id="6K6U"/>
    </source>
</evidence>
<proteinExistence type="evidence at protein level"/>
<reference key="1">
    <citation type="journal article" date="2004" name="Nature">
        <title>The DNA sequence and comparative analysis of human chromosome 5.</title>
        <authorList>
            <person name="Schmutz J."/>
            <person name="Martin J."/>
            <person name="Terry A."/>
            <person name="Couronne O."/>
            <person name="Grimwood J."/>
            <person name="Lowry S."/>
            <person name="Gordon L.A."/>
            <person name="Scott D."/>
            <person name="Xie G."/>
            <person name="Huang W."/>
            <person name="Hellsten U."/>
            <person name="Tran-Gyamfi M."/>
            <person name="She X."/>
            <person name="Prabhakar S."/>
            <person name="Aerts A."/>
            <person name="Altherr M."/>
            <person name="Bajorek E."/>
            <person name="Black S."/>
            <person name="Branscomb E."/>
            <person name="Caoile C."/>
            <person name="Challacombe J.F."/>
            <person name="Chan Y.M."/>
            <person name="Denys M."/>
            <person name="Detter J.C."/>
            <person name="Escobar J."/>
            <person name="Flowers D."/>
            <person name="Fotopulos D."/>
            <person name="Glavina T."/>
            <person name="Gomez M."/>
            <person name="Gonzales E."/>
            <person name="Goodstein D."/>
            <person name="Grigoriev I."/>
            <person name="Groza M."/>
            <person name="Hammon N."/>
            <person name="Hawkins T."/>
            <person name="Haydu L."/>
            <person name="Israni S."/>
            <person name="Jett J."/>
            <person name="Kadner K."/>
            <person name="Kimball H."/>
            <person name="Kobayashi A."/>
            <person name="Lopez F."/>
            <person name="Lou Y."/>
            <person name="Martinez D."/>
            <person name="Medina C."/>
            <person name="Morgan J."/>
            <person name="Nandkeshwar R."/>
            <person name="Noonan J.P."/>
            <person name="Pitluck S."/>
            <person name="Pollard M."/>
            <person name="Predki P."/>
            <person name="Priest J."/>
            <person name="Ramirez L."/>
            <person name="Retterer J."/>
            <person name="Rodriguez A."/>
            <person name="Rogers S."/>
            <person name="Salamov A."/>
            <person name="Salazar A."/>
            <person name="Thayer N."/>
            <person name="Tice H."/>
            <person name="Tsai M."/>
            <person name="Ustaszewska A."/>
            <person name="Vo N."/>
            <person name="Wheeler J."/>
            <person name="Wu K."/>
            <person name="Yang J."/>
            <person name="Dickson M."/>
            <person name="Cheng J.-F."/>
            <person name="Eichler E.E."/>
            <person name="Olsen A."/>
            <person name="Pennacchio L.A."/>
            <person name="Rokhsar D.S."/>
            <person name="Richardson P."/>
            <person name="Lucas S.M."/>
            <person name="Myers R.M."/>
            <person name="Rubin E.M."/>
        </authorList>
    </citation>
    <scope>NUCLEOTIDE SEQUENCE [LARGE SCALE GENOMIC DNA]</scope>
</reference>
<reference key="2">
    <citation type="journal article" date="2004" name="Genome Res.">
        <title>The status, quality, and expansion of the NIH full-length cDNA project: the Mammalian Gene Collection (MGC).</title>
        <authorList>
            <consortium name="The MGC Project Team"/>
        </authorList>
    </citation>
    <scope>NUCLEOTIDE SEQUENCE [LARGE SCALE MRNA]</scope>
    <source>
        <tissue>Brain</tissue>
    </source>
</reference>
<reference key="3">
    <citation type="journal article" date="2004" name="Nat. Genet.">
        <title>Complete sequencing and characterization of 21,243 full-length human cDNAs.</title>
        <authorList>
            <person name="Ota T."/>
            <person name="Suzuki Y."/>
            <person name="Nishikawa T."/>
            <person name="Otsuki T."/>
            <person name="Sugiyama T."/>
            <person name="Irie R."/>
            <person name="Wakamatsu A."/>
            <person name="Hayashi K."/>
            <person name="Sato H."/>
            <person name="Nagai K."/>
            <person name="Kimura K."/>
            <person name="Makita H."/>
            <person name="Sekine M."/>
            <person name="Obayashi M."/>
            <person name="Nishi T."/>
            <person name="Shibahara T."/>
            <person name="Tanaka T."/>
            <person name="Ishii S."/>
            <person name="Yamamoto J."/>
            <person name="Saito K."/>
            <person name="Kawai Y."/>
            <person name="Isono Y."/>
            <person name="Nakamura Y."/>
            <person name="Nagahari K."/>
            <person name="Murakami K."/>
            <person name="Yasuda T."/>
            <person name="Iwayanagi T."/>
            <person name="Wagatsuma M."/>
            <person name="Shiratori A."/>
            <person name="Sudo H."/>
            <person name="Hosoiri T."/>
            <person name="Kaku Y."/>
            <person name="Kodaira H."/>
            <person name="Kondo H."/>
            <person name="Sugawara M."/>
            <person name="Takahashi M."/>
            <person name="Kanda K."/>
            <person name="Yokoi T."/>
            <person name="Furuya T."/>
            <person name="Kikkawa E."/>
            <person name="Omura Y."/>
            <person name="Abe K."/>
            <person name="Kamihara K."/>
            <person name="Katsuta N."/>
            <person name="Sato K."/>
            <person name="Tanikawa M."/>
            <person name="Yamazaki M."/>
            <person name="Ninomiya K."/>
            <person name="Ishibashi T."/>
            <person name="Yamashita H."/>
            <person name="Murakawa K."/>
            <person name="Fujimori K."/>
            <person name="Tanai H."/>
            <person name="Kimata M."/>
            <person name="Watanabe M."/>
            <person name="Hiraoka S."/>
            <person name="Chiba Y."/>
            <person name="Ishida S."/>
            <person name="Ono Y."/>
            <person name="Takiguchi S."/>
            <person name="Watanabe S."/>
            <person name="Yosida M."/>
            <person name="Hotuta T."/>
            <person name="Kusano J."/>
            <person name="Kanehori K."/>
            <person name="Takahashi-Fujii A."/>
            <person name="Hara H."/>
            <person name="Tanase T.-O."/>
            <person name="Nomura Y."/>
            <person name="Togiya S."/>
            <person name="Komai F."/>
            <person name="Hara R."/>
            <person name="Takeuchi K."/>
            <person name="Arita M."/>
            <person name="Imose N."/>
            <person name="Musashino K."/>
            <person name="Yuuki H."/>
            <person name="Oshima A."/>
            <person name="Sasaki N."/>
            <person name="Aotsuka S."/>
            <person name="Yoshikawa Y."/>
            <person name="Matsunawa H."/>
            <person name="Ichihara T."/>
            <person name="Shiohata N."/>
            <person name="Sano S."/>
            <person name="Moriya S."/>
            <person name="Momiyama H."/>
            <person name="Satoh N."/>
            <person name="Takami S."/>
            <person name="Terashima Y."/>
            <person name="Suzuki O."/>
            <person name="Nakagawa S."/>
            <person name="Senoh A."/>
            <person name="Mizoguchi H."/>
            <person name="Goto Y."/>
            <person name="Shimizu F."/>
            <person name="Wakebe H."/>
            <person name="Hishigaki H."/>
            <person name="Watanabe T."/>
            <person name="Sugiyama A."/>
            <person name="Takemoto M."/>
            <person name="Kawakami B."/>
            <person name="Yamazaki M."/>
            <person name="Watanabe K."/>
            <person name="Kumagai A."/>
            <person name="Itakura S."/>
            <person name="Fukuzumi Y."/>
            <person name="Fujimori Y."/>
            <person name="Komiyama M."/>
            <person name="Tashiro H."/>
            <person name="Tanigami A."/>
            <person name="Fujiwara T."/>
            <person name="Ono T."/>
            <person name="Yamada K."/>
            <person name="Fujii Y."/>
            <person name="Ozaki K."/>
            <person name="Hirao M."/>
            <person name="Ohmori Y."/>
            <person name="Kawabata A."/>
            <person name="Hikiji T."/>
            <person name="Kobatake N."/>
            <person name="Inagaki H."/>
            <person name="Ikema Y."/>
            <person name="Okamoto S."/>
            <person name="Okitani R."/>
            <person name="Kawakami T."/>
            <person name="Noguchi S."/>
            <person name="Itoh T."/>
            <person name="Shigeta K."/>
            <person name="Senba T."/>
            <person name="Matsumura K."/>
            <person name="Nakajima Y."/>
            <person name="Mizuno T."/>
            <person name="Morinaga M."/>
            <person name="Sasaki M."/>
            <person name="Togashi T."/>
            <person name="Oyama M."/>
            <person name="Hata H."/>
            <person name="Watanabe M."/>
            <person name="Komatsu T."/>
            <person name="Mizushima-Sugano J."/>
            <person name="Satoh T."/>
            <person name="Shirai Y."/>
            <person name="Takahashi Y."/>
            <person name="Nakagawa K."/>
            <person name="Okumura K."/>
            <person name="Nagase T."/>
            <person name="Nomura N."/>
            <person name="Kikuchi H."/>
            <person name="Masuho Y."/>
            <person name="Yamashita R."/>
            <person name="Nakai K."/>
            <person name="Yada T."/>
            <person name="Nakamura Y."/>
            <person name="Ohara O."/>
            <person name="Isogai T."/>
            <person name="Sugano S."/>
        </authorList>
    </citation>
    <scope>NUCLEOTIDE SEQUENCE [LARGE SCALE MRNA] OF 730-1430</scope>
    <scope>VARIANT GLN-1409</scope>
</reference>
<reference key="4">
    <citation type="journal article" date="2008" name="Proc. Natl. Acad. Sci. U.S.A.">
        <title>A quantitative atlas of mitotic phosphorylation.</title>
        <authorList>
            <person name="Dephoure N."/>
            <person name="Zhou C."/>
            <person name="Villen J."/>
            <person name="Beausoleil S.A."/>
            <person name="Bakalarski C.E."/>
            <person name="Elledge S.J."/>
            <person name="Gygi S.P."/>
        </authorList>
    </citation>
    <scope>PHOSPHORYLATION [LARGE SCALE ANALYSIS] AT SER-1092 AND SER-1281</scope>
    <scope>IDENTIFICATION BY MASS SPECTROMETRY [LARGE SCALE ANALYSIS]</scope>
    <source>
        <tissue>Cervix carcinoma</tissue>
    </source>
</reference>
<reference key="5">
    <citation type="journal article" date="2009" name="Anal. Chem.">
        <title>Lys-N and trypsin cover complementary parts of the phosphoproteome in a refined SCX-based approach.</title>
        <authorList>
            <person name="Gauci S."/>
            <person name="Helbig A.O."/>
            <person name="Slijper M."/>
            <person name="Krijgsveld J."/>
            <person name="Heck A.J."/>
            <person name="Mohammed S."/>
        </authorList>
    </citation>
    <scope>IDENTIFICATION BY MASS SPECTROMETRY [LARGE SCALE ANALYSIS]</scope>
</reference>
<reference key="6">
    <citation type="journal article" date="2009" name="Sci. Signal.">
        <title>Quantitative phosphoproteomic analysis of T cell receptor signaling reveals system-wide modulation of protein-protein interactions.</title>
        <authorList>
            <person name="Mayya V."/>
            <person name="Lundgren D.H."/>
            <person name="Hwang S.-I."/>
            <person name="Rezaul K."/>
            <person name="Wu L."/>
            <person name="Eng J.K."/>
            <person name="Rodionov V."/>
            <person name="Han D.K."/>
        </authorList>
    </citation>
    <scope>PHOSPHORYLATION [LARGE SCALE ANALYSIS] AT SER-1089</scope>
    <scope>IDENTIFICATION BY MASS SPECTROMETRY [LARGE SCALE ANALYSIS]</scope>
    <source>
        <tissue>Leukemic T-cell</tissue>
    </source>
</reference>
<reference key="7">
    <citation type="journal article" date="2011" name="BMC Syst. Biol.">
        <title>Initial characterization of the human central proteome.</title>
        <authorList>
            <person name="Burkard T.R."/>
            <person name="Planyavsky M."/>
            <person name="Kaupe I."/>
            <person name="Breitwieser F.P."/>
            <person name="Buerckstuemmer T."/>
            <person name="Bennett K.L."/>
            <person name="Superti-Furga G."/>
            <person name="Colinge J."/>
        </authorList>
    </citation>
    <scope>IDENTIFICATION BY MASS SPECTROMETRY [LARGE SCALE ANALYSIS]</scope>
</reference>
<reference key="8">
    <citation type="journal article" date="2011" name="Sci. Signal.">
        <title>System-wide temporal characterization of the proteome and phosphoproteome of human embryonic stem cell differentiation.</title>
        <authorList>
            <person name="Rigbolt K.T."/>
            <person name="Prokhorova T.A."/>
            <person name="Akimov V."/>
            <person name="Henningsen J."/>
            <person name="Johansen P.T."/>
            <person name="Kratchmarova I."/>
            <person name="Kassem M."/>
            <person name="Mann M."/>
            <person name="Olsen J.V."/>
            <person name="Blagoev B."/>
        </authorList>
    </citation>
    <scope>IDENTIFICATION BY MASS SPECTROMETRY [LARGE SCALE ANALYSIS]</scope>
</reference>
<reference key="9">
    <citation type="journal article" date="2013" name="J. Proteome Res.">
        <title>Toward a comprehensive characterization of a human cancer cell phosphoproteome.</title>
        <authorList>
            <person name="Zhou H."/>
            <person name="Di Palma S."/>
            <person name="Preisinger C."/>
            <person name="Peng M."/>
            <person name="Polat A.N."/>
            <person name="Heck A.J."/>
            <person name="Mohammed S."/>
        </authorList>
    </citation>
    <scope>PHOSPHORYLATION [LARGE SCALE ANALYSIS] AT SER-1202</scope>
    <scope>IDENTIFICATION BY MASS SPECTROMETRY [LARGE SCALE ANALYSIS]</scope>
    <source>
        <tissue>Cervix carcinoma</tissue>
        <tissue>Erythroleukemia</tissue>
    </source>
</reference>
<reference key="10">
    <citation type="journal article" date="2015" name="J. Biol. Chem.">
        <title>structural basis for the discriminative recognition of N6-methyladenosine RNA by the human YT521-B homology domain family of proteins.</title>
        <authorList>
            <person name="Xu C."/>
            <person name="Liu K."/>
            <person name="Ahmed H."/>
            <person name="Loppnau P."/>
            <person name="Schapira M."/>
            <person name="Min J."/>
        </authorList>
    </citation>
    <scope>FUNCTION</scope>
    <scope>RNA-BINDING</scope>
</reference>
<reference key="11">
    <citation type="journal article" date="2017" name="Mol. Cell">
        <title>Regulation of m6A transcripts by the 3'-5' RNA helicase YTHDC2 is essential for a successful meiotic program in the mammalian germline.</title>
        <authorList>
            <person name="Wojtas M.N."/>
            <person name="Pandey R.R."/>
            <person name="Mendel M."/>
            <person name="Homolka D."/>
            <person name="Sachidanandam R."/>
            <person name="Pillai R.S."/>
        </authorList>
    </citation>
    <scope>FUNCTION</scope>
    <scope>CATALYTIC ACTIVITY</scope>
    <scope>DOMAIN</scope>
    <scope>RNA-BINDING</scope>
    <scope>INTERACTION WITH XRN1</scope>
    <scope>MUTAGENESIS OF GLU-317 AND TRP-1360</scope>
</reference>
<reference key="12">
    <citation type="journal article" date="2017" name="Elife">
        <title>The conserved RNA helicase YTHDC2 regulates the transition from proliferation to differentiation in the germline.</title>
        <authorList>
            <person name="Bailey A.S."/>
            <person name="Batista P.J."/>
            <person name="Gold R.S."/>
            <person name="Chen Y.G."/>
            <person name="de Rooij D.G."/>
            <person name="Chang H.Y."/>
            <person name="Fuller M.T."/>
        </authorList>
    </citation>
    <scope>TISSUE SPECIFICITY</scope>
</reference>
<reference key="13">
    <citation type="journal article" date="2018" name="RNA">
        <title>The m6A reader protein YTHDC2 interacts with the small ribosomal subunit and the 5'-3' exoribonuclease XRN1.</title>
        <authorList>
            <person name="Kretschmer J."/>
            <person name="Rao H."/>
            <person name="Hackert P."/>
            <person name="Sloan K.E."/>
            <person name="Hoebartner C."/>
            <person name="Bohnsack M.T."/>
        </authorList>
    </citation>
    <scope>FUNCTION</scope>
    <scope>SUBCELLULAR LOCATION</scope>
    <scope>INTERACTION WITH XRN1</scope>
</reference>
<reference key="14">
    <citation type="journal article" date="2020" name="Nucleic Acids Res.">
        <title>The human methyltransferase ZCCHC4 catalyses N6-methyladenosine modification of 28S ribosomal RNA.</title>
        <authorList>
            <person name="Pinto R."/>
            <person name="Vaagboe C.B."/>
            <person name="Jakobsson M.E."/>
            <person name="Kim Y."/>
            <person name="Baltissen M.P."/>
            <person name="O'Donohue M.F."/>
            <person name="Guzman U.H."/>
            <person name="Malecki J.M."/>
            <person name="Wu J."/>
            <person name="Kirpekar F."/>
            <person name="Olsen J.V."/>
            <person name="Gleizes P.E."/>
            <person name="Vermeulen M."/>
            <person name="Leidel S.A."/>
            <person name="Slupphaug G."/>
            <person name="Falnes P.O."/>
        </authorList>
    </citation>
    <scope>INTERACTION WITH ZCCHC4</scope>
</reference>
<reference key="15">
    <citation type="submission" date="2007-10" db="PDB data bank">
        <title>Solution structure of the YTH domain in YTH domain-containing protein 2.</title>
        <authorList>
            <consortium name="RIKEN structural genomics initiative (RSGI)"/>
        </authorList>
    </citation>
    <scope>STRUCTURE BY NMR OF 1288-1421</scope>
</reference>
<reference evidence="18" key="16">
    <citation type="journal article" date="2019" name="Biochem. Biophys. Res. Commun.">
        <title>Crystal structure of human YTHDC2 YTH domain.</title>
        <authorList>
            <person name="Ma C."/>
            <person name="Liao S."/>
            <person name="Zhu Z."/>
        </authorList>
    </citation>
    <scope>X-RAY CRYSTALLOGRAPHY (2.27 ANGSTROMS) OF 1286-1426</scope>
</reference>